<keyword id="KW-0997">Cell inner membrane</keyword>
<keyword id="KW-1003">Cell membrane</keyword>
<keyword id="KW-0472">Membrane</keyword>
<keyword id="KW-0653">Protein transport</keyword>
<keyword id="KW-0811">Translocation</keyword>
<keyword id="KW-0812">Transmembrane</keyword>
<keyword id="KW-1133">Transmembrane helix</keyword>
<keyword id="KW-0813">Transport</keyword>
<gene>
    <name evidence="1" type="primary">tatA</name>
    <name type="ordered locus">PSPPH_0367</name>
</gene>
<sequence length="91" mass="10021">MGIFDWKHWIVILIVVVLVFGTKKLKGLGSDVGESIKGFRKAMNDDDKPAEQPAPQPQQAQAAPQGSPLNQPHTIDAQAHKVDEPIRKDQV</sequence>
<comment type="function">
    <text evidence="1">Part of the twin-arginine translocation (Tat) system that transports large folded proteins containing a characteristic twin-arginine motif in their signal peptide across membranes. TatA could form the protein-conducting channel of the Tat system.</text>
</comment>
<comment type="subunit">
    <text evidence="1">The Tat system comprises two distinct complexes: a TatABC complex, containing multiple copies of TatA, TatB and TatC subunits, and a separate TatA complex, containing only TatA subunits. Substrates initially bind to the TatABC complex, which probably triggers association of the separate TatA complex to form the active translocon.</text>
</comment>
<comment type="subcellular location">
    <subcellularLocation>
        <location evidence="1">Cell inner membrane</location>
        <topology evidence="1">Single-pass membrane protein</topology>
    </subcellularLocation>
</comment>
<comment type="similarity">
    <text evidence="1">Belongs to the TatA/E family.</text>
</comment>
<organism>
    <name type="scientific">Pseudomonas savastanoi pv. phaseolicola (strain 1448A / Race 6)</name>
    <name type="common">Pseudomonas syringae pv. phaseolicola (strain 1448A / Race 6)</name>
    <dbReference type="NCBI Taxonomy" id="264730"/>
    <lineage>
        <taxon>Bacteria</taxon>
        <taxon>Pseudomonadati</taxon>
        <taxon>Pseudomonadota</taxon>
        <taxon>Gammaproteobacteria</taxon>
        <taxon>Pseudomonadales</taxon>
        <taxon>Pseudomonadaceae</taxon>
        <taxon>Pseudomonas</taxon>
    </lineage>
</organism>
<dbReference type="EMBL" id="CP000058">
    <property type="protein sequence ID" value="AAZ36212.1"/>
    <property type="molecule type" value="Genomic_DNA"/>
</dbReference>
<dbReference type="RefSeq" id="WP_002551630.1">
    <property type="nucleotide sequence ID" value="NC_005773.3"/>
</dbReference>
<dbReference type="SMR" id="Q48PJ9"/>
<dbReference type="KEGG" id="psp:PSPPH_0367"/>
<dbReference type="eggNOG" id="COG1826">
    <property type="taxonomic scope" value="Bacteria"/>
</dbReference>
<dbReference type="HOGENOM" id="CLU_086034_5_1_6"/>
<dbReference type="Proteomes" id="UP000000551">
    <property type="component" value="Chromosome"/>
</dbReference>
<dbReference type="GO" id="GO:0033281">
    <property type="term" value="C:TAT protein transport complex"/>
    <property type="evidence" value="ECO:0007669"/>
    <property type="project" value="UniProtKB-UniRule"/>
</dbReference>
<dbReference type="GO" id="GO:0008320">
    <property type="term" value="F:protein transmembrane transporter activity"/>
    <property type="evidence" value="ECO:0007669"/>
    <property type="project" value="UniProtKB-UniRule"/>
</dbReference>
<dbReference type="GO" id="GO:0043953">
    <property type="term" value="P:protein transport by the Tat complex"/>
    <property type="evidence" value="ECO:0007669"/>
    <property type="project" value="UniProtKB-UniRule"/>
</dbReference>
<dbReference type="FunFam" id="1.20.5.3310:FF:000001">
    <property type="entry name" value="Probable Sec-independent protein translocase protein TatE"/>
    <property type="match status" value="1"/>
</dbReference>
<dbReference type="Gene3D" id="1.20.5.3310">
    <property type="match status" value="1"/>
</dbReference>
<dbReference type="HAMAP" id="MF_00236">
    <property type="entry name" value="TatA_E"/>
    <property type="match status" value="1"/>
</dbReference>
<dbReference type="InterPro" id="IPR003369">
    <property type="entry name" value="TatA/B/E"/>
</dbReference>
<dbReference type="InterPro" id="IPR006312">
    <property type="entry name" value="TatA/E"/>
</dbReference>
<dbReference type="NCBIfam" id="NF001681">
    <property type="entry name" value="PRK00442.1"/>
    <property type="match status" value="1"/>
</dbReference>
<dbReference type="NCBIfam" id="TIGR01411">
    <property type="entry name" value="tatAE"/>
    <property type="match status" value="1"/>
</dbReference>
<dbReference type="PANTHER" id="PTHR42982">
    <property type="entry name" value="SEC-INDEPENDENT PROTEIN TRANSLOCASE PROTEIN TATA"/>
    <property type="match status" value="1"/>
</dbReference>
<dbReference type="PANTHER" id="PTHR42982:SF1">
    <property type="entry name" value="SEC-INDEPENDENT PROTEIN TRANSLOCASE PROTEIN TATA"/>
    <property type="match status" value="1"/>
</dbReference>
<dbReference type="Pfam" id="PF02416">
    <property type="entry name" value="TatA_B_E"/>
    <property type="match status" value="1"/>
</dbReference>
<accession>Q48PJ9</accession>
<feature type="chain" id="PRO_1000044420" description="Sec-independent protein translocase protein TatA">
    <location>
        <begin position="1"/>
        <end position="91"/>
    </location>
</feature>
<feature type="transmembrane region" description="Helical" evidence="1">
    <location>
        <begin position="1"/>
        <end position="21"/>
    </location>
</feature>
<feature type="region of interest" description="Disordered" evidence="2">
    <location>
        <begin position="42"/>
        <end position="91"/>
    </location>
</feature>
<feature type="compositionally biased region" description="Low complexity" evidence="2">
    <location>
        <begin position="51"/>
        <end position="65"/>
    </location>
</feature>
<feature type="compositionally biased region" description="Basic and acidic residues" evidence="2">
    <location>
        <begin position="78"/>
        <end position="91"/>
    </location>
</feature>
<name>TATA_PSE14</name>
<protein>
    <recommendedName>
        <fullName evidence="1">Sec-independent protein translocase protein TatA</fullName>
    </recommendedName>
</protein>
<reference key="1">
    <citation type="journal article" date="2005" name="J. Bacteriol.">
        <title>Whole-genome sequence analysis of Pseudomonas syringae pv. phaseolicola 1448A reveals divergence among pathovars in genes involved in virulence and transposition.</title>
        <authorList>
            <person name="Joardar V."/>
            <person name="Lindeberg M."/>
            <person name="Jackson R.W."/>
            <person name="Selengut J."/>
            <person name="Dodson R."/>
            <person name="Brinkac L.M."/>
            <person name="Daugherty S.C."/>
            <person name="DeBoy R.T."/>
            <person name="Durkin A.S."/>
            <person name="Gwinn Giglio M."/>
            <person name="Madupu R."/>
            <person name="Nelson W.C."/>
            <person name="Rosovitz M.J."/>
            <person name="Sullivan S.A."/>
            <person name="Crabtree J."/>
            <person name="Creasy T."/>
            <person name="Davidsen T.M."/>
            <person name="Haft D.H."/>
            <person name="Zafar N."/>
            <person name="Zhou L."/>
            <person name="Halpin R."/>
            <person name="Holley T."/>
            <person name="Khouri H.M."/>
            <person name="Feldblyum T.V."/>
            <person name="White O."/>
            <person name="Fraser C.M."/>
            <person name="Chatterjee A.K."/>
            <person name="Cartinhour S."/>
            <person name="Schneider D."/>
            <person name="Mansfield J.W."/>
            <person name="Collmer A."/>
            <person name="Buell R."/>
        </authorList>
    </citation>
    <scope>NUCLEOTIDE SEQUENCE [LARGE SCALE GENOMIC DNA]</scope>
    <source>
        <strain>1448A / Race 6</strain>
    </source>
</reference>
<evidence type="ECO:0000255" key="1">
    <source>
        <dbReference type="HAMAP-Rule" id="MF_00236"/>
    </source>
</evidence>
<evidence type="ECO:0000256" key="2">
    <source>
        <dbReference type="SAM" id="MobiDB-lite"/>
    </source>
</evidence>
<proteinExistence type="inferred from homology"/>